<name>BLNK_HUMAN</name>
<proteinExistence type="evidence at protein level"/>
<reference key="1">
    <citation type="journal article" date="1998" name="Immunity">
        <title>BLNK: a central linker protein in B cell activation.</title>
        <authorList>
            <person name="Fu C."/>
            <person name="Turck C.W."/>
            <person name="Kurosaki T."/>
            <person name="Chan A.C."/>
        </authorList>
    </citation>
    <scope>NUCLEOTIDE SEQUENCE [MRNA] (ISOFORMS 1 AND 2)</scope>
    <scope>PROTEIN SEQUENCE OF 7-20; 140-146; 237-248; 250-257; 366-373 AND 392-405</scope>
    <scope>FUNCTION</scope>
    <scope>SUBCELLULAR LOCATION</scope>
    <scope>INTERACTION WITH PLCG1; VAV1; GRB2 AND NCK1</scope>
    <scope>ALTERNATIVE SPLICING</scope>
    <scope>PHOSPHORYLATION</scope>
    <scope>MUTAGENESIS OF TYR-72; TYR-84; TYR-96 AND TYR-178</scope>
</reference>
<reference key="2">
    <citation type="journal article" date="1999" name="Science">
        <title>An essential role for BLNK in human B cell development.</title>
        <authorList>
            <person name="Minegishi Y."/>
            <person name="Rohrer J."/>
            <person name="Coustan-Smith E."/>
            <person name="Lederman H.M."/>
            <person name="Pappu R."/>
            <person name="Campana D."/>
            <person name="Chan A.C."/>
            <person name="Conley M.E."/>
        </authorList>
    </citation>
    <scope>NUCLEOTIDE SEQUENCE [GENOMIC DNA] (ISOFORMS 1 AND 2)</scope>
    <scope>FUNCTION IN B-CELL DEVELOPMENT</scope>
    <scope>INVOLVEMENT IN AGM4</scope>
</reference>
<reference key="3">
    <citation type="journal article" date="2006" name="Oncogene">
        <title>SLP65 deficiency results in perpetual V(D)J recombinase activity in pre-B-lymphoblastic leukemia and B-cell lymphoma cells.</title>
        <authorList>
            <person name="Sprangers M."/>
            <person name="Feldhahn N."/>
            <person name="Liedtke S."/>
            <person name="Jumaa H."/>
            <person name="Siebert R."/>
            <person name="Muschen M."/>
        </authorList>
    </citation>
    <scope>NUCLEOTIDE SEQUENCE [MRNA] (ISOFORM 3)</scope>
</reference>
<reference key="4">
    <citation type="journal article" date="2004" name="Nature">
        <title>The DNA sequence and comparative analysis of human chromosome 10.</title>
        <authorList>
            <person name="Deloukas P."/>
            <person name="Earthrowl M.E."/>
            <person name="Grafham D.V."/>
            <person name="Rubenfield M."/>
            <person name="French L."/>
            <person name="Steward C.A."/>
            <person name="Sims S.K."/>
            <person name="Jones M.C."/>
            <person name="Searle S."/>
            <person name="Scott C."/>
            <person name="Howe K."/>
            <person name="Hunt S.E."/>
            <person name="Andrews T.D."/>
            <person name="Gilbert J.G.R."/>
            <person name="Swarbreck D."/>
            <person name="Ashurst J.L."/>
            <person name="Taylor A."/>
            <person name="Battles J."/>
            <person name="Bird C.P."/>
            <person name="Ainscough R."/>
            <person name="Almeida J.P."/>
            <person name="Ashwell R.I.S."/>
            <person name="Ambrose K.D."/>
            <person name="Babbage A.K."/>
            <person name="Bagguley C.L."/>
            <person name="Bailey J."/>
            <person name="Banerjee R."/>
            <person name="Bates K."/>
            <person name="Beasley H."/>
            <person name="Bray-Allen S."/>
            <person name="Brown A.J."/>
            <person name="Brown J.Y."/>
            <person name="Burford D.C."/>
            <person name="Burrill W."/>
            <person name="Burton J."/>
            <person name="Cahill P."/>
            <person name="Camire D."/>
            <person name="Carter N.P."/>
            <person name="Chapman J.C."/>
            <person name="Clark S.Y."/>
            <person name="Clarke G."/>
            <person name="Clee C.M."/>
            <person name="Clegg S."/>
            <person name="Corby N."/>
            <person name="Coulson A."/>
            <person name="Dhami P."/>
            <person name="Dutta I."/>
            <person name="Dunn M."/>
            <person name="Faulkner L."/>
            <person name="Frankish A."/>
            <person name="Frankland J.A."/>
            <person name="Garner P."/>
            <person name="Garnett J."/>
            <person name="Gribble S."/>
            <person name="Griffiths C."/>
            <person name="Grocock R."/>
            <person name="Gustafson E."/>
            <person name="Hammond S."/>
            <person name="Harley J.L."/>
            <person name="Hart E."/>
            <person name="Heath P.D."/>
            <person name="Ho T.P."/>
            <person name="Hopkins B."/>
            <person name="Horne J."/>
            <person name="Howden P.J."/>
            <person name="Huckle E."/>
            <person name="Hynds C."/>
            <person name="Johnson C."/>
            <person name="Johnson D."/>
            <person name="Kana A."/>
            <person name="Kay M."/>
            <person name="Kimberley A.M."/>
            <person name="Kershaw J.K."/>
            <person name="Kokkinaki M."/>
            <person name="Laird G.K."/>
            <person name="Lawlor S."/>
            <person name="Lee H.M."/>
            <person name="Leongamornlert D.A."/>
            <person name="Laird G."/>
            <person name="Lloyd C."/>
            <person name="Lloyd D.M."/>
            <person name="Loveland J."/>
            <person name="Lovell J."/>
            <person name="McLaren S."/>
            <person name="McLay K.E."/>
            <person name="McMurray A."/>
            <person name="Mashreghi-Mohammadi M."/>
            <person name="Matthews L."/>
            <person name="Milne S."/>
            <person name="Nickerson T."/>
            <person name="Nguyen M."/>
            <person name="Overton-Larty E."/>
            <person name="Palmer S.A."/>
            <person name="Pearce A.V."/>
            <person name="Peck A.I."/>
            <person name="Pelan S."/>
            <person name="Phillimore B."/>
            <person name="Porter K."/>
            <person name="Rice C.M."/>
            <person name="Rogosin A."/>
            <person name="Ross M.T."/>
            <person name="Sarafidou T."/>
            <person name="Sehra H.K."/>
            <person name="Shownkeen R."/>
            <person name="Skuce C.D."/>
            <person name="Smith M."/>
            <person name="Standring L."/>
            <person name="Sycamore N."/>
            <person name="Tester J."/>
            <person name="Thorpe A."/>
            <person name="Torcasso W."/>
            <person name="Tracey A."/>
            <person name="Tromans A."/>
            <person name="Tsolas J."/>
            <person name="Wall M."/>
            <person name="Walsh J."/>
            <person name="Wang H."/>
            <person name="Weinstock K."/>
            <person name="West A.P."/>
            <person name="Willey D.L."/>
            <person name="Whitehead S.L."/>
            <person name="Wilming L."/>
            <person name="Wray P.W."/>
            <person name="Young L."/>
            <person name="Chen Y."/>
            <person name="Lovering R.C."/>
            <person name="Moschonas N.K."/>
            <person name="Siebert R."/>
            <person name="Fechtel K."/>
            <person name="Bentley D."/>
            <person name="Durbin R.M."/>
            <person name="Hubbard T."/>
            <person name="Doucette-Stamm L."/>
            <person name="Beck S."/>
            <person name="Smith D.R."/>
            <person name="Rogers J."/>
        </authorList>
    </citation>
    <scope>NUCLEOTIDE SEQUENCE [LARGE SCALE GENOMIC DNA]</scope>
</reference>
<reference key="5">
    <citation type="journal article" date="2004" name="Genome Res.">
        <title>The status, quality, and expansion of the NIH full-length cDNA project: the Mammalian Gene Collection (MGC).</title>
        <authorList>
            <consortium name="The MGC Project Team"/>
        </authorList>
    </citation>
    <scope>NUCLEOTIDE SEQUENCE [LARGE SCALE MRNA] (ISOFORM 1)</scope>
    <source>
        <tissue>B-cell</tissue>
    </source>
</reference>
<reference key="6">
    <citation type="journal article" date="1997" name="J. Biol. Chem.">
        <title>Identification of two tyrosine phosphoproteins, pp70 and pp68, which interact with phospholipase Cgamma, Grb2, and Vav after B cell antigen receptor activation.</title>
        <authorList>
            <person name="Fu C."/>
            <person name="Chan A.C."/>
        </authorList>
    </citation>
    <scope>INTERACTION WITH PLCG1; VAV1; GRB2 AND NCK1</scope>
</reference>
<reference key="7">
    <citation type="journal article" date="2002" name="EMBO J.">
        <title>BLNK: molecular scaffolding through 'cis'-mediated organization of signaling proteins.</title>
        <authorList>
            <person name="Chiu C.W."/>
            <person name="Dalton M."/>
            <person name="Ishiai M."/>
            <person name="Kurosaki T."/>
            <person name="Chan A.C."/>
        </authorList>
    </citation>
    <scope>PHOSPHORYLATION AT TYR-72; TYR-84; TYR-96; TYR-178 AND TYR-189 BY SYK</scope>
    <scope>MUTAGENESIS OF TYR-72; TYR-84 AND TYR-96</scope>
</reference>
<reference key="8">
    <citation type="journal article" date="2004" name="Immunology">
        <title>Deficiency of BLNK hampers PLC-gamma2 phosphorylation and Ca2+ influx induced by the pre-B-cell receptor in human pre-B cells.</title>
        <authorList>
            <person name="Taguchi T."/>
            <person name="Kiyokawa N."/>
            <person name="Takenouch H."/>
            <person name="Matsui J."/>
            <person name="Tang W.-R."/>
            <person name="Nakajima H."/>
            <person name="Suzuki K."/>
            <person name="Shiozawa Y."/>
            <person name="Saito M."/>
            <person name="Katagiri Y.U."/>
            <person name="Takahashi T."/>
            <person name="Karasuyama H."/>
            <person name="Matsuo Y."/>
            <person name="Okita H."/>
            <person name="Fujimoto J."/>
        </authorList>
    </citation>
    <scope>FUNCTION IN PLCG1 ACTIVATION AND CALCIUM MOBILIZATION</scope>
</reference>
<reference key="9">
    <citation type="journal article" date="2006" name="Blood">
        <title>Human SLP-65 isoforms contribute differently to activation and apoptosis of B lymphocytes.</title>
        <authorList>
            <person name="Grabbe A."/>
            <person name="Wienands J."/>
        </authorList>
    </citation>
    <scope>FUNCTION</scope>
    <scope>INTERACTION WITH GRB2</scope>
</reference>
<reference key="10">
    <citation type="journal article" date="2008" name="EMBO J.">
        <title>The kinase Syk as an adaptor controlling sustained calcium signalling and B-cell development.</title>
        <authorList>
            <person name="Kulathu Y."/>
            <person name="Hobeika E."/>
            <person name="Turchinovich G."/>
            <person name="Reth M."/>
        </authorList>
    </citation>
    <scope>INTERACTION WITH SYK</scope>
</reference>
<reference key="11">
    <citation type="journal article" date="2011" name="Mol. Cell. Biol.">
        <title>SCIMP, a transmembrane adapter protein involved in major histocompatibility complex class II signaling.</title>
        <authorList>
            <person name="Draber P."/>
            <person name="Vonkova I."/>
            <person name="Stepanek O."/>
            <person name="Hrdinka M."/>
            <person name="Kucova M."/>
            <person name="Skopcova T."/>
            <person name="Otahal P."/>
            <person name="Angelisova P."/>
            <person name="Horejsi V."/>
            <person name="Yeung M."/>
            <person name="Weiss A."/>
            <person name="Brdicka T."/>
        </authorList>
    </citation>
    <scope>INTERACTION WITH SCIMP</scope>
</reference>
<protein>
    <recommendedName>
        <fullName>B-cell linker protein</fullName>
    </recommendedName>
    <alternativeName>
        <fullName>B-cell adapter containing a SH2 domain protein</fullName>
    </alternativeName>
    <alternativeName>
        <fullName>B-cell adapter containing a Src homology 2 domain protein</fullName>
    </alternativeName>
    <alternativeName>
        <fullName>Cytoplasmic adapter protein</fullName>
    </alternativeName>
    <alternativeName>
        <fullName>Src homology 2 domain-containing leukocyte protein of 65 kDa</fullName>
        <shortName>SLP-65</shortName>
    </alternativeName>
</protein>
<feature type="chain" id="PRO_0000064940" description="B-cell linker protein">
    <location>
        <begin position="1"/>
        <end position="456"/>
    </location>
</feature>
<feature type="domain" description="SH2" evidence="1">
    <location>
        <begin position="346"/>
        <end position="453"/>
    </location>
</feature>
<feature type="region of interest" description="Disordered" evidence="2">
    <location>
        <begin position="36"/>
        <end position="301"/>
    </location>
</feature>
<feature type="compositionally biased region" description="Acidic residues" evidence="2">
    <location>
        <begin position="57"/>
        <end position="74"/>
    </location>
</feature>
<feature type="compositionally biased region" description="Acidic residues" evidence="2">
    <location>
        <begin position="173"/>
        <end position="187"/>
    </location>
</feature>
<feature type="compositionally biased region" description="Low complexity" evidence="2">
    <location>
        <begin position="212"/>
        <end position="226"/>
    </location>
</feature>
<feature type="compositionally biased region" description="Pro residues" evidence="2">
    <location>
        <begin position="236"/>
        <end position="245"/>
    </location>
</feature>
<feature type="compositionally biased region" description="Low complexity" evidence="2">
    <location>
        <begin position="251"/>
        <end position="260"/>
    </location>
</feature>
<feature type="compositionally biased region" description="Basic and acidic residues" evidence="2">
    <location>
        <begin position="271"/>
        <end position="289"/>
    </location>
</feature>
<feature type="modified residue" description="Phosphotyrosine; by SYK" evidence="4">
    <location>
        <position position="72"/>
    </location>
</feature>
<feature type="modified residue" description="Phosphotyrosine; by SYK" evidence="4">
    <location>
        <position position="84"/>
    </location>
</feature>
<feature type="modified residue" description="Phosphotyrosine; by SYK" evidence="4">
    <location>
        <position position="96"/>
    </location>
</feature>
<feature type="modified residue" description="Phosphotyrosine; by SYK" evidence="4">
    <location>
        <position position="178"/>
    </location>
</feature>
<feature type="modified residue" description="Phosphotyrosine; by SYK" evidence="4">
    <location>
        <position position="189"/>
    </location>
</feature>
<feature type="splice variant" id="VSP_016178" description="In isoform 2." evidence="12">
    <location>
        <begin position="203"/>
        <end position="225"/>
    </location>
</feature>
<feature type="splice variant" id="VSP_045324" description="In isoform 3." evidence="11">
    <location>
        <begin position="366"/>
        <end position="417"/>
    </location>
</feature>
<feature type="mutagenesis site" description="Significant phosphorylation reduction; when associated with F-84; F-96 and F-178." evidence="4 10">
    <original>Y</original>
    <variation>F</variation>
    <location>
        <position position="72"/>
    </location>
</feature>
<feature type="mutagenesis site" description="Significant phosphorylation reduction; when associated with F-72; F-96 and F-178." evidence="4 10">
    <original>Y</original>
    <variation>F</variation>
    <location>
        <position position="84"/>
    </location>
</feature>
<feature type="mutagenesis site" description="Significant phosphorylation reduction; when associated with F-72; F-84 and F-178." evidence="4 10">
    <original>Y</original>
    <variation>F</variation>
    <location>
        <position position="96"/>
    </location>
</feature>
<feature type="mutagenesis site" description="Significant phosphorylation reduction; when associated with F-72; F-84 and F-96." evidence="10">
    <original>Y</original>
    <variation>F</variation>
    <location>
        <position position="178"/>
    </location>
</feature>
<feature type="sequence conflict" description="In Ref. 5; AAH18906." evidence="13" ref="5">
    <original>E</original>
    <variation>Q</variation>
    <location>
        <position position="62"/>
    </location>
</feature>
<evidence type="ECO:0000255" key="1">
    <source>
        <dbReference type="PROSITE-ProRule" id="PRU00191"/>
    </source>
</evidence>
<evidence type="ECO:0000256" key="2">
    <source>
        <dbReference type="SAM" id="MobiDB-lite"/>
    </source>
</evidence>
<evidence type="ECO:0000269" key="3">
    <source>
    </source>
</evidence>
<evidence type="ECO:0000269" key="4">
    <source>
    </source>
</evidence>
<evidence type="ECO:0000269" key="5">
    <source>
    </source>
</evidence>
<evidence type="ECO:0000269" key="6">
    <source>
    </source>
</evidence>
<evidence type="ECO:0000269" key="7">
    <source>
    </source>
</evidence>
<evidence type="ECO:0000269" key="8">
    <source>
    </source>
</evidence>
<evidence type="ECO:0000269" key="9">
    <source>
    </source>
</evidence>
<evidence type="ECO:0000269" key="10">
    <source>
    </source>
</evidence>
<evidence type="ECO:0000303" key="11">
    <source>
    </source>
</evidence>
<evidence type="ECO:0000303" key="12">
    <source>
    </source>
</evidence>
<evidence type="ECO:0000305" key="13"/>
<keyword id="KW-0002">3D-structure</keyword>
<keyword id="KW-0025">Alternative splicing</keyword>
<keyword id="KW-0075">B-cell activation</keyword>
<keyword id="KW-1003">Cell membrane</keyword>
<keyword id="KW-0963">Cytoplasm</keyword>
<keyword id="KW-0903">Direct protein sequencing</keyword>
<keyword id="KW-0472">Membrane</keyword>
<keyword id="KW-0597">Phosphoprotein</keyword>
<keyword id="KW-1267">Proteomics identification</keyword>
<keyword id="KW-1185">Reference proteome</keyword>
<keyword id="KW-0727">SH2 domain</keyword>
<comment type="function">
    <text evidence="3 5 6 10">Functions as a central linker protein, downstream of the B-cell receptor (BCR), bridging the SYK kinase to a multitude of signaling pathways and regulating biological outcomes of B-cell function and development. Plays a role in the activation of ERK/EPHB2, MAP kinase p38 and JNK. Modulates AP1 activation. Important for the activation of NF-kappa-B and NFAT. Plays an important role in BCR-mediated PLCG1 and PLCG2 activation and Ca(2+) mobilization and is required for trafficking of the BCR to late endosomes. However, does not seem to be required for pre-BCR-mediated activation of MAP kinase and phosphatidyl-inositol 3 (PI3) kinase signaling. May be required for the RAC1-JNK pathway. Plays a critical role in orchestrating the pro-B cell to pre-B cell transition. May play an important role in BCR-induced B-cell apoptosis.</text>
</comment>
<comment type="subunit">
    <text evidence="6 7 8 9 10">Associates with PLCG1, VAV1 and NCK1 in a B-cell antigen receptor-dependent fashion. Interacts with VAV3, PLCG2 and GRB2. Interacts through its SH2 domain with CD79A. Interacts (via SH2 domain) with SYK; phosphorylated and activated by SYK. Interacts (via SH2 domain) with SCIMP; this interaction is dependent on phosphorylation of SCIMP 'Tyr-131' (PubMed:21930792).</text>
</comment>
<comment type="interaction">
    <interactant intactId="EBI-2623522">
        <id>Q8WV28</id>
    </interactant>
    <interactant intactId="EBI-608057">
        <id>P10275</id>
        <label>AR</label>
    </interactant>
    <organismsDiffer>false</organismsDiffer>
    <experiments>2</experiments>
</comment>
<comment type="interaction">
    <interactant intactId="EBI-2623522">
        <id>Q8WV28</id>
    </interactant>
    <interactant intactId="EBI-624835">
        <id>Q06187</id>
        <label>BTK</label>
    </interactant>
    <organismsDiffer>false</organismsDiffer>
    <experiments>2</experiments>
</comment>
<comment type="interaction">
    <interactant intactId="EBI-2623522">
        <id>Q8WV28</id>
    </interactant>
    <interactant intactId="EBI-298152">
        <id>Q9Y5K6</id>
        <label>CD2AP</label>
    </interactant>
    <organismsDiffer>false</organismsDiffer>
    <experiments>2</experiments>
</comment>
<comment type="interaction">
    <interactant intactId="EBI-2623522">
        <id>Q8WV28</id>
    </interactant>
    <interactant intactId="EBI-401755">
        <id>P62993</id>
        <label>GRB2</label>
    </interactant>
    <organismsDiffer>false</organismsDiffer>
    <experiments>4</experiments>
</comment>
<comment type="interaction">
    <interactant intactId="EBI-2623522">
        <id>Q8WV28</id>
    </interactant>
    <interactant intactId="EBI-1379503">
        <id>P10721</id>
        <label>KIT</label>
    </interactant>
    <organismsDiffer>false</organismsDiffer>
    <experiments>2</experiments>
</comment>
<comment type="interaction">
    <interactant intactId="EBI-2623522">
        <id>Q8WV28</id>
    </interactant>
    <interactant intactId="EBI-7061433">
        <id>Q5ZMQ7</id>
        <label>RCJMB04_1g20</label>
    </interactant>
    <organismsDiffer>true</organismsDiffer>
    <experiments>3</experiments>
</comment>
<comment type="subcellular location">
    <subcellularLocation>
        <location evidence="10">Cytoplasm</location>
    </subcellularLocation>
    <subcellularLocation>
        <location evidence="10">Cell membrane</location>
    </subcellularLocation>
    <text>BCR activation results in the translocation to membrane fraction.</text>
</comment>
<comment type="alternative products">
    <event type="alternative splicing"/>
    <isoform>
        <id>Q8WV28-1</id>
        <name>1</name>
        <sequence type="displayed"/>
    </isoform>
    <isoform>
        <id>Q8WV28-2</id>
        <name>2</name>
        <sequence type="described" ref="VSP_016178"/>
    </isoform>
    <isoform>
        <id>Q8WV28-3</id>
        <name>3</name>
        <sequence type="described" ref="VSP_045324"/>
    </isoform>
</comment>
<comment type="tissue specificity">
    <text>Expressed in B-cell lineage and fibroblast cell lines (at protein level). Highest levels of expression in the spleen, with lower levels in the liver, kidney, pancreas, small intestines and colon.</text>
</comment>
<comment type="PTM">
    <text evidence="4 10">Following BCR activation, phosphorylated on tyrosine residues by SYK and LYN. When phosphorylated, serves as a scaffold to assemble downstream targets of antigen activation, including PLCG1, VAV1, GRB2 and NCK1. Phosphorylation of Tyr-84, Tyr-178 and Tyr-189 facilitates PLCG1 binding. Phosphorylation of Tyr-96 facilitates BTK binding. Phosphorylation of Tyr-72 facilitates VAV1 and NCK1 binding. Phosphorylation is required for both Ca(2+) and MAPK signaling pathways.</text>
</comment>
<comment type="disease" evidence="3">
    <disease id="DI-02874">
        <name>Agammaglobulinemia 4, autosomal recessive</name>
        <acronym>AGM4</acronym>
        <description>A primary immunodeficiency characterized by profoundly low or absent serum antibodies and low or absent circulating B-cells due to an early block of B-cell development. Affected individuals develop severe infections in the first years of life.</description>
        <dbReference type="MIM" id="613502"/>
    </disease>
    <text>The disease is caused by variants affecting the gene represented in this entry.</text>
</comment>
<comment type="online information" name="BLNKbase">
    <link uri="https://databases.lovd.nl/shared/genes/BLNK"/>
    <text>BLNK mutation db</text>
</comment>
<comment type="online information" name="Atlas of Genetics and Cytogenetics in Oncology and Haematology">
    <link uri="https://atlasgeneticsoncology.org/gene/804/BLNK"/>
</comment>
<sequence>MDKLNKITVPASQKLRQLQKMVHDIKNNEGGIMNKIKKLKVKAPPSVPRRDYASESPADEEEQWSDDFDSDYENPDEHSDSEMYVMPAEENADDSYEPPPVEQETRPVHPALPFARGEYIDNRSSQRHSPPFSKTLPSKPSWPSEKARLTSTLPALTALQKPQVPPKPKGLLEDEADYVVPVEDNDENYIHPTESSSPPPEKAPMVNRSTKPNSSTPASPPGTASGRNSGAWETKSPPPAAPSPLPRAGKKPTTPLKTTPVASQQNASSVCEEKPIPAERHRGSSHRQEAVQSPVFPPAQKQIHQKPIPLPRFTEGGNPTVDGPLPSFSSNSTISEQEAGVLCKPWYAGACDRKSAEEALHRSNKDGSFLIRKSSGHDSKQPYTLVVFFNKRVYNIPVRFIEATKQYALGRKKNGEEYFGSVAEIIRNHQHSPLVLIDSQNNTKDSTRLKYAVKVS</sequence>
<gene>
    <name type="primary">BLNK</name>
    <name type="synonym">BASH</name>
    <name type="synonym">SLP65</name>
</gene>
<dbReference type="EMBL" id="AF068180">
    <property type="protein sequence ID" value="AAC39936.1"/>
    <property type="molecule type" value="mRNA"/>
</dbReference>
<dbReference type="EMBL" id="AF068181">
    <property type="protein sequence ID" value="AAC39937.1"/>
    <property type="molecule type" value="mRNA"/>
</dbReference>
<dbReference type="EMBL" id="AF180756">
    <property type="protein sequence ID" value="AAF20382.1"/>
    <property type="molecule type" value="Genomic_DNA"/>
</dbReference>
<dbReference type="EMBL" id="AF180740">
    <property type="protein sequence ID" value="AAF20382.1"/>
    <property type="status" value="JOINED"/>
    <property type="molecule type" value="Genomic_DNA"/>
</dbReference>
<dbReference type="EMBL" id="AF180741">
    <property type="protein sequence ID" value="AAF20382.1"/>
    <property type="status" value="JOINED"/>
    <property type="molecule type" value="Genomic_DNA"/>
</dbReference>
<dbReference type="EMBL" id="AF180742">
    <property type="protein sequence ID" value="AAF20382.1"/>
    <property type="status" value="JOINED"/>
    <property type="molecule type" value="Genomic_DNA"/>
</dbReference>
<dbReference type="EMBL" id="AF180743">
    <property type="protein sequence ID" value="AAF20382.1"/>
    <property type="status" value="JOINED"/>
    <property type="molecule type" value="Genomic_DNA"/>
</dbReference>
<dbReference type="EMBL" id="AF180744">
    <property type="protein sequence ID" value="AAF20382.1"/>
    <property type="status" value="JOINED"/>
    <property type="molecule type" value="Genomic_DNA"/>
</dbReference>
<dbReference type="EMBL" id="AF180745">
    <property type="protein sequence ID" value="AAF20382.1"/>
    <property type="status" value="JOINED"/>
    <property type="molecule type" value="Genomic_DNA"/>
</dbReference>
<dbReference type="EMBL" id="AF180746">
    <property type="protein sequence ID" value="AAF20382.1"/>
    <property type="status" value="JOINED"/>
    <property type="molecule type" value="Genomic_DNA"/>
</dbReference>
<dbReference type="EMBL" id="AF180747">
    <property type="protein sequence ID" value="AAF20382.1"/>
    <property type="status" value="JOINED"/>
    <property type="molecule type" value="Genomic_DNA"/>
</dbReference>
<dbReference type="EMBL" id="AF180748">
    <property type="protein sequence ID" value="AAF20382.1"/>
    <property type="status" value="JOINED"/>
    <property type="molecule type" value="Genomic_DNA"/>
</dbReference>
<dbReference type="EMBL" id="AF180749">
    <property type="protein sequence ID" value="AAF20382.1"/>
    <property type="status" value="JOINED"/>
    <property type="molecule type" value="Genomic_DNA"/>
</dbReference>
<dbReference type="EMBL" id="AF180750">
    <property type="protein sequence ID" value="AAF20382.1"/>
    <property type="status" value="JOINED"/>
    <property type="molecule type" value="Genomic_DNA"/>
</dbReference>
<dbReference type="EMBL" id="AF180751">
    <property type="protein sequence ID" value="AAF20382.1"/>
    <property type="status" value="JOINED"/>
    <property type="molecule type" value="Genomic_DNA"/>
</dbReference>
<dbReference type="EMBL" id="AF180752">
    <property type="protein sequence ID" value="AAF20382.1"/>
    <property type="status" value="JOINED"/>
    <property type="molecule type" value="Genomic_DNA"/>
</dbReference>
<dbReference type="EMBL" id="AF180753">
    <property type="protein sequence ID" value="AAF20382.1"/>
    <property type="status" value="JOINED"/>
    <property type="molecule type" value="Genomic_DNA"/>
</dbReference>
<dbReference type="EMBL" id="AF180754">
    <property type="protein sequence ID" value="AAF20382.1"/>
    <property type="status" value="JOINED"/>
    <property type="molecule type" value="Genomic_DNA"/>
</dbReference>
<dbReference type="EMBL" id="AF180755">
    <property type="protein sequence ID" value="AAF20382.1"/>
    <property type="status" value="JOINED"/>
    <property type="molecule type" value="Genomic_DNA"/>
</dbReference>
<dbReference type="EMBL" id="AF180756">
    <property type="protein sequence ID" value="AAF20383.1"/>
    <property type="molecule type" value="Genomic_DNA"/>
</dbReference>
<dbReference type="EMBL" id="AF180740">
    <property type="protein sequence ID" value="AAF20383.1"/>
    <property type="status" value="JOINED"/>
    <property type="molecule type" value="Genomic_DNA"/>
</dbReference>
<dbReference type="EMBL" id="AF180741">
    <property type="protein sequence ID" value="AAF20383.1"/>
    <property type="status" value="JOINED"/>
    <property type="molecule type" value="Genomic_DNA"/>
</dbReference>
<dbReference type="EMBL" id="AF180742">
    <property type="protein sequence ID" value="AAF20383.1"/>
    <property type="status" value="JOINED"/>
    <property type="molecule type" value="Genomic_DNA"/>
</dbReference>
<dbReference type="EMBL" id="AF180743">
    <property type="protein sequence ID" value="AAF20383.1"/>
    <property type="status" value="JOINED"/>
    <property type="molecule type" value="Genomic_DNA"/>
</dbReference>
<dbReference type="EMBL" id="AF180744">
    <property type="protein sequence ID" value="AAF20383.1"/>
    <property type="status" value="JOINED"/>
    <property type="molecule type" value="Genomic_DNA"/>
</dbReference>
<dbReference type="EMBL" id="AF180745">
    <property type="protein sequence ID" value="AAF20383.1"/>
    <property type="status" value="JOINED"/>
    <property type="molecule type" value="Genomic_DNA"/>
</dbReference>
<dbReference type="EMBL" id="AF180746">
    <property type="protein sequence ID" value="AAF20383.1"/>
    <property type="status" value="JOINED"/>
    <property type="molecule type" value="Genomic_DNA"/>
</dbReference>
<dbReference type="EMBL" id="AF180748">
    <property type="protein sequence ID" value="AAF20383.1"/>
    <property type="status" value="JOINED"/>
    <property type="molecule type" value="Genomic_DNA"/>
</dbReference>
<dbReference type="EMBL" id="AF180749">
    <property type="protein sequence ID" value="AAF20383.1"/>
    <property type="status" value="JOINED"/>
    <property type="molecule type" value="Genomic_DNA"/>
</dbReference>
<dbReference type="EMBL" id="AF180750">
    <property type="protein sequence ID" value="AAF20383.1"/>
    <property type="status" value="JOINED"/>
    <property type="molecule type" value="Genomic_DNA"/>
</dbReference>
<dbReference type="EMBL" id="AF180751">
    <property type="protein sequence ID" value="AAF20383.1"/>
    <property type="status" value="JOINED"/>
    <property type="molecule type" value="Genomic_DNA"/>
</dbReference>
<dbReference type="EMBL" id="AF180752">
    <property type="protein sequence ID" value="AAF20383.1"/>
    <property type="status" value="JOINED"/>
    <property type="molecule type" value="Genomic_DNA"/>
</dbReference>
<dbReference type="EMBL" id="AF180753">
    <property type="protein sequence ID" value="AAF20383.1"/>
    <property type="status" value="JOINED"/>
    <property type="molecule type" value="Genomic_DNA"/>
</dbReference>
<dbReference type="EMBL" id="AF180754">
    <property type="protein sequence ID" value="AAF20383.1"/>
    <property type="status" value="JOINED"/>
    <property type="molecule type" value="Genomic_DNA"/>
</dbReference>
<dbReference type="EMBL" id="AF180755">
    <property type="protein sequence ID" value="AAF20383.1"/>
    <property type="status" value="JOINED"/>
    <property type="molecule type" value="Genomic_DNA"/>
</dbReference>
<dbReference type="EMBL" id="AM180337">
    <property type="protein sequence ID" value="CAJ55331.1"/>
    <property type="molecule type" value="mRNA"/>
</dbReference>
<dbReference type="EMBL" id="AC021037">
    <property type="status" value="NOT_ANNOTATED_CDS"/>
    <property type="molecule type" value="Genomic_DNA"/>
</dbReference>
<dbReference type="EMBL" id="BC018906">
    <property type="protein sequence ID" value="AAH18906.1"/>
    <property type="molecule type" value="mRNA"/>
</dbReference>
<dbReference type="CCDS" id="CCDS44464.1">
    <molecule id="Q8WV28-2"/>
</dbReference>
<dbReference type="CCDS" id="CCDS58091.1">
    <molecule id="Q8WV28-3"/>
</dbReference>
<dbReference type="CCDS" id="CCDS7446.1">
    <molecule id="Q8WV28-1"/>
</dbReference>
<dbReference type="RefSeq" id="NP_001107566.1">
    <molecule id="Q8WV28-2"/>
    <property type="nucleotide sequence ID" value="NM_001114094.2"/>
</dbReference>
<dbReference type="RefSeq" id="NP_001245369.1">
    <molecule id="Q8WV28-3"/>
    <property type="nucleotide sequence ID" value="NM_001258440.2"/>
</dbReference>
<dbReference type="RefSeq" id="NP_037446.1">
    <molecule id="Q8WV28-1"/>
    <property type="nucleotide sequence ID" value="NM_013314.4"/>
</dbReference>
<dbReference type="PDB" id="6YLU">
    <property type="method" value="X-ray"/>
    <property type="resolution" value="1.88 A"/>
    <property type="chains" value="B=147-158"/>
</dbReference>
<dbReference type="PDBsum" id="6YLU"/>
<dbReference type="SMR" id="Q8WV28"/>
<dbReference type="BioGRID" id="118894">
    <property type="interactions" value="41"/>
</dbReference>
<dbReference type="CORUM" id="Q8WV28"/>
<dbReference type="FunCoup" id="Q8WV28">
    <property type="interactions" value="1456"/>
</dbReference>
<dbReference type="IntAct" id="Q8WV28">
    <property type="interactions" value="23"/>
</dbReference>
<dbReference type="MINT" id="Q8WV28"/>
<dbReference type="STRING" id="9606.ENSP00000224337"/>
<dbReference type="GlyGen" id="Q8WV28">
    <property type="glycosylation" value="2 sites"/>
</dbReference>
<dbReference type="iPTMnet" id="Q8WV28"/>
<dbReference type="PhosphoSitePlus" id="Q8WV28"/>
<dbReference type="BioMuta" id="BLNK"/>
<dbReference type="DMDM" id="82592659"/>
<dbReference type="jPOST" id="Q8WV28"/>
<dbReference type="MassIVE" id="Q8WV28"/>
<dbReference type="PaxDb" id="9606-ENSP00000224337"/>
<dbReference type="PeptideAtlas" id="Q8WV28"/>
<dbReference type="ProteomicsDB" id="74740">
    <molecule id="Q8WV28-1"/>
</dbReference>
<dbReference type="ProteomicsDB" id="74741">
    <molecule id="Q8WV28-2"/>
</dbReference>
<dbReference type="Antibodypedia" id="3990">
    <property type="antibodies" value="740 antibodies from 41 providers"/>
</dbReference>
<dbReference type="DNASU" id="29760"/>
<dbReference type="Ensembl" id="ENST00000224337.10">
    <molecule id="Q8WV28-1"/>
    <property type="protein sequence ID" value="ENSP00000224337.6"/>
    <property type="gene ID" value="ENSG00000095585.18"/>
</dbReference>
<dbReference type="Ensembl" id="ENST00000371176.7">
    <molecule id="Q8WV28-2"/>
    <property type="protein sequence ID" value="ENSP00000360218.2"/>
    <property type="gene ID" value="ENSG00000095585.18"/>
</dbReference>
<dbReference type="Ensembl" id="ENST00000413476.6">
    <molecule id="Q8WV28-3"/>
    <property type="protein sequence ID" value="ENSP00000397487.2"/>
    <property type="gene ID" value="ENSG00000095585.18"/>
</dbReference>
<dbReference type="GeneID" id="29760"/>
<dbReference type="KEGG" id="hsa:29760"/>
<dbReference type="MANE-Select" id="ENST00000224337.10">
    <property type="protein sequence ID" value="ENSP00000224337.6"/>
    <property type="RefSeq nucleotide sequence ID" value="NM_013314.4"/>
    <property type="RefSeq protein sequence ID" value="NP_037446.1"/>
</dbReference>
<dbReference type="UCSC" id="uc001kls.5">
    <molecule id="Q8WV28-1"/>
    <property type="organism name" value="human"/>
</dbReference>
<dbReference type="AGR" id="HGNC:14211"/>
<dbReference type="CTD" id="29760"/>
<dbReference type="DisGeNET" id="29760"/>
<dbReference type="GeneCards" id="BLNK"/>
<dbReference type="HGNC" id="HGNC:14211">
    <property type="gene designation" value="BLNK"/>
</dbReference>
<dbReference type="HPA" id="ENSG00000095585">
    <property type="expression patterns" value="Tissue enhanced (lymphoid)"/>
</dbReference>
<dbReference type="MalaCards" id="BLNK"/>
<dbReference type="MIM" id="604515">
    <property type="type" value="gene"/>
</dbReference>
<dbReference type="MIM" id="613502">
    <property type="type" value="phenotype"/>
</dbReference>
<dbReference type="neXtProt" id="NX_Q8WV28"/>
<dbReference type="NIAGADS" id="ENSG00000095585"/>
<dbReference type="OpenTargets" id="ENSG00000095585"/>
<dbReference type="Orphanet" id="33110">
    <property type="disease" value="Autosomal non-syndromic agammaglobulinemia"/>
</dbReference>
<dbReference type="PharmGKB" id="PA25371"/>
<dbReference type="VEuPathDB" id="HostDB:ENSG00000095585"/>
<dbReference type="eggNOG" id="ENOG502QUXR">
    <property type="taxonomic scope" value="Eukaryota"/>
</dbReference>
<dbReference type="GeneTree" id="ENSGT00940000155715"/>
<dbReference type="HOGENOM" id="CLU_043673_0_0_1"/>
<dbReference type="InParanoid" id="Q8WV28"/>
<dbReference type="OMA" id="ELLEDEX"/>
<dbReference type="OrthoDB" id="10044490at2759"/>
<dbReference type="PAN-GO" id="Q8WV28">
    <property type="GO annotations" value="3 GO annotations based on evolutionary models"/>
</dbReference>
<dbReference type="PhylomeDB" id="Q8WV28"/>
<dbReference type="TreeFam" id="TF326567"/>
<dbReference type="PathwayCommons" id="Q8WV28"/>
<dbReference type="Reactome" id="R-HSA-912631">
    <property type="pathway name" value="Regulation of signaling by CBL"/>
</dbReference>
<dbReference type="Reactome" id="R-HSA-9679191">
    <property type="pathway name" value="Potential therapeutics for SARS"/>
</dbReference>
<dbReference type="Reactome" id="R-HSA-983695">
    <property type="pathway name" value="Antigen activates B Cell Receptor (BCR) leading to generation of second messengers"/>
</dbReference>
<dbReference type="SignaLink" id="Q8WV28"/>
<dbReference type="SIGNOR" id="Q8WV28"/>
<dbReference type="BioGRID-ORCS" id="29760">
    <property type="hits" value="19 hits in 1150 CRISPR screens"/>
</dbReference>
<dbReference type="CD-CODE" id="F345034F">
    <property type="entry name" value="Signaling cluster"/>
</dbReference>
<dbReference type="ChiTaRS" id="BLNK">
    <property type="organism name" value="human"/>
</dbReference>
<dbReference type="GeneWiki" id="B-cell_linker"/>
<dbReference type="GenomeRNAi" id="29760"/>
<dbReference type="Pharos" id="Q8WV28">
    <property type="development level" value="Tbio"/>
</dbReference>
<dbReference type="PRO" id="PR:Q8WV28"/>
<dbReference type="Proteomes" id="UP000005640">
    <property type="component" value="Chromosome 10"/>
</dbReference>
<dbReference type="RNAct" id="Q8WV28">
    <property type="molecule type" value="protein"/>
</dbReference>
<dbReference type="Bgee" id="ENSG00000095585">
    <property type="expression patterns" value="Expressed in tongue squamous epithelium and 173 other cell types or tissues"/>
</dbReference>
<dbReference type="ExpressionAtlas" id="Q8WV28">
    <property type="expression patterns" value="baseline and differential"/>
</dbReference>
<dbReference type="GO" id="GO:0005737">
    <property type="term" value="C:cytoplasm"/>
    <property type="evidence" value="ECO:0000318"/>
    <property type="project" value="GO_Central"/>
</dbReference>
<dbReference type="GO" id="GO:0005829">
    <property type="term" value="C:cytosol"/>
    <property type="evidence" value="ECO:0000314"/>
    <property type="project" value="UniProtKB"/>
</dbReference>
<dbReference type="GO" id="GO:0043231">
    <property type="term" value="C:intracellular membrane-bounded organelle"/>
    <property type="evidence" value="ECO:0000314"/>
    <property type="project" value="HPA"/>
</dbReference>
<dbReference type="GO" id="GO:0016020">
    <property type="term" value="C:membrane"/>
    <property type="evidence" value="ECO:0000314"/>
    <property type="project" value="UniProtKB"/>
</dbReference>
<dbReference type="GO" id="GO:0005886">
    <property type="term" value="C:plasma membrane"/>
    <property type="evidence" value="ECO:0000314"/>
    <property type="project" value="HPA"/>
</dbReference>
<dbReference type="GO" id="GO:0019899">
    <property type="term" value="F:enzyme binding"/>
    <property type="evidence" value="ECO:0000353"/>
    <property type="project" value="UniProtKB"/>
</dbReference>
<dbReference type="GO" id="GO:0008289">
    <property type="term" value="F:lipid binding"/>
    <property type="evidence" value="ECO:0000314"/>
    <property type="project" value="DisProt"/>
</dbReference>
<dbReference type="GO" id="GO:0140693">
    <property type="term" value="F:molecular condensate scaffold activity"/>
    <property type="evidence" value="ECO:0000315"/>
    <property type="project" value="DisProt"/>
</dbReference>
<dbReference type="GO" id="GO:0043274">
    <property type="term" value="F:phospholipase binding"/>
    <property type="evidence" value="ECO:0000353"/>
    <property type="project" value="ARUK-UCL"/>
</dbReference>
<dbReference type="GO" id="GO:0019901">
    <property type="term" value="F:protein kinase binding"/>
    <property type="evidence" value="ECO:0000353"/>
    <property type="project" value="ARUK-UCL"/>
</dbReference>
<dbReference type="GO" id="GO:1990782">
    <property type="term" value="F:protein tyrosine kinase binding"/>
    <property type="evidence" value="ECO:0000353"/>
    <property type="project" value="UniProtKB"/>
</dbReference>
<dbReference type="GO" id="GO:0042169">
    <property type="term" value="F:SH2 domain binding"/>
    <property type="evidence" value="ECO:0000314"/>
    <property type="project" value="UniProtKB"/>
</dbReference>
<dbReference type="GO" id="GO:0035591">
    <property type="term" value="F:signaling adaptor activity"/>
    <property type="evidence" value="ECO:0000314"/>
    <property type="project" value="UniProtKB"/>
</dbReference>
<dbReference type="GO" id="GO:0005068">
    <property type="term" value="F:transmembrane receptor protein tyrosine kinase adaptor activity"/>
    <property type="evidence" value="ECO:0000304"/>
    <property type="project" value="ProtInc"/>
</dbReference>
<dbReference type="GO" id="GO:0030183">
    <property type="term" value="P:B cell differentiation"/>
    <property type="evidence" value="ECO:0000303"/>
    <property type="project" value="UniProtKB"/>
</dbReference>
<dbReference type="GO" id="GO:0050853">
    <property type="term" value="P:B cell receptor signaling pathway"/>
    <property type="evidence" value="ECO:0000314"/>
    <property type="project" value="UniProtKB"/>
</dbReference>
<dbReference type="GO" id="GO:0007169">
    <property type="term" value="P:cell surface receptor protein tyrosine kinase signaling pathway"/>
    <property type="evidence" value="ECO:0000318"/>
    <property type="project" value="GO_Central"/>
</dbReference>
<dbReference type="GO" id="GO:0006959">
    <property type="term" value="P:humoral immune response"/>
    <property type="evidence" value="ECO:0000304"/>
    <property type="project" value="ProtInc"/>
</dbReference>
<dbReference type="GO" id="GO:0006954">
    <property type="term" value="P:inflammatory response"/>
    <property type="evidence" value="ECO:0000304"/>
    <property type="project" value="ProtInc"/>
</dbReference>
<dbReference type="GO" id="GO:0035556">
    <property type="term" value="P:intracellular signal transduction"/>
    <property type="evidence" value="ECO:0000314"/>
    <property type="project" value="UniProtKB"/>
</dbReference>
<dbReference type="GO" id="GO:0010628">
    <property type="term" value="P:positive regulation of gene expression"/>
    <property type="evidence" value="ECO:0007669"/>
    <property type="project" value="Ensembl"/>
</dbReference>
<dbReference type="CDD" id="cd09929">
    <property type="entry name" value="SH2_BLNK_SLP-76"/>
    <property type="match status" value="1"/>
</dbReference>
<dbReference type="DisProt" id="DP01544"/>
<dbReference type="FunFam" id="3.30.505.10:FF:000016">
    <property type="entry name" value="B-cell linker protein isoform 2"/>
    <property type="match status" value="1"/>
</dbReference>
<dbReference type="Gene3D" id="3.30.505.10">
    <property type="entry name" value="SH2 domain"/>
    <property type="match status" value="1"/>
</dbReference>
<dbReference type="InterPro" id="IPR051751">
    <property type="entry name" value="Immunoreceptor_sig_adapters"/>
</dbReference>
<dbReference type="InterPro" id="IPR000980">
    <property type="entry name" value="SH2"/>
</dbReference>
<dbReference type="InterPro" id="IPR036860">
    <property type="entry name" value="SH2_dom_sf"/>
</dbReference>
<dbReference type="PANTHER" id="PTHR14098:SF3">
    <property type="entry name" value="B-CELL LINKER PROTEIN"/>
    <property type="match status" value="1"/>
</dbReference>
<dbReference type="PANTHER" id="PTHR14098">
    <property type="entry name" value="SH2 DOMAIN CONTAINING PROTEIN"/>
    <property type="match status" value="1"/>
</dbReference>
<dbReference type="Pfam" id="PF00017">
    <property type="entry name" value="SH2"/>
    <property type="match status" value="1"/>
</dbReference>
<dbReference type="SMART" id="SM00252">
    <property type="entry name" value="SH2"/>
    <property type="match status" value="1"/>
</dbReference>
<dbReference type="SUPFAM" id="SSF55550">
    <property type="entry name" value="SH2 domain"/>
    <property type="match status" value="1"/>
</dbReference>
<dbReference type="PROSITE" id="PS50001">
    <property type="entry name" value="SH2"/>
    <property type="match status" value="1"/>
</dbReference>
<organism>
    <name type="scientific">Homo sapiens</name>
    <name type="common">Human</name>
    <dbReference type="NCBI Taxonomy" id="9606"/>
    <lineage>
        <taxon>Eukaryota</taxon>
        <taxon>Metazoa</taxon>
        <taxon>Chordata</taxon>
        <taxon>Craniata</taxon>
        <taxon>Vertebrata</taxon>
        <taxon>Euteleostomi</taxon>
        <taxon>Mammalia</taxon>
        <taxon>Eutheria</taxon>
        <taxon>Euarchontoglires</taxon>
        <taxon>Primates</taxon>
        <taxon>Haplorrhini</taxon>
        <taxon>Catarrhini</taxon>
        <taxon>Hominidae</taxon>
        <taxon>Homo</taxon>
    </lineage>
</organism>
<accession>Q8WV28</accession>
<accession>O75498</accession>
<accession>O75499</accession>
<accession>Q2MD49</accession>